<evidence type="ECO:0000255" key="1">
    <source>
        <dbReference type="HAMAP-Rule" id="MF_00728"/>
    </source>
</evidence>
<organism>
    <name type="scientific">Listeria monocytogenes serovar 1/2a (strain ATCC BAA-679 / EGD-e)</name>
    <dbReference type="NCBI Taxonomy" id="169963"/>
    <lineage>
        <taxon>Bacteria</taxon>
        <taxon>Bacillati</taxon>
        <taxon>Bacillota</taxon>
        <taxon>Bacilli</taxon>
        <taxon>Bacillales</taxon>
        <taxon>Listeriaceae</taxon>
        <taxon>Listeria</taxon>
    </lineage>
</organism>
<feature type="chain" id="PRO_0000172876" description="Septation ring formation regulator EzrA">
    <location>
        <begin position="1"/>
        <end position="571"/>
    </location>
</feature>
<feature type="topological domain" description="Extracellular" evidence="1">
    <location>
        <begin position="1"/>
        <end position="3"/>
    </location>
</feature>
<feature type="transmembrane region" description="Helical" evidence="1">
    <location>
        <begin position="4"/>
        <end position="22"/>
    </location>
</feature>
<feature type="topological domain" description="Cytoplasmic" evidence="1">
    <location>
        <begin position="23"/>
        <end position="571"/>
    </location>
</feature>
<feature type="coiled-coil region" evidence="1">
    <location>
        <begin position="248"/>
        <end position="298"/>
    </location>
</feature>
<feature type="coiled-coil region" evidence="1">
    <location>
        <begin position="326"/>
        <end position="374"/>
    </location>
</feature>
<feature type="coiled-coil region" evidence="1">
    <location>
        <begin position="400"/>
        <end position="437"/>
    </location>
</feature>
<feature type="coiled-coil region" evidence="1">
    <location>
        <begin position="478"/>
        <end position="529"/>
    </location>
</feature>
<dbReference type="EMBL" id="AL591979">
    <property type="protein sequence ID" value="CAC99672.1"/>
    <property type="molecule type" value="Genomic_DNA"/>
</dbReference>
<dbReference type="PIR" id="AB1274">
    <property type="entry name" value="AB1274"/>
</dbReference>
<dbReference type="RefSeq" id="NP_465119.1">
    <property type="nucleotide sequence ID" value="NC_003210.1"/>
</dbReference>
<dbReference type="RefSeq" id="WP_010989755.1">
    <property type="nucleotide sequence ID" value="NZ_CP149495.1"/>
</dbReference>
<dbReference type="SMR" id="Q8Y6T8"/>
<dbReference type="STRING" id="169963.gene:17594251"/>
<dbReference type="PaxDb" id="169963-lmo1594"/>
<dbReference type="EnsemblBacteria" id="CAC99672">
    <property type="protein sequence ID" value="CAC99672"/>
    <property type="gene ID" value="CAC99672"/>
</dbReference>
<dbReference type="GeneID" id="986850"/>
<dbReference type="KEGG" id="lmo:lmo1594"/>
<dbReference type="PATRIC" id="fig|169963.11.peg.1636"/>
<dbReference type="eggNOG" id="COG4477">
    <property type="taxonomic scope" value="Bacteria"/>
</dbReference>
<dbReference type="HOGENOM" id="CLU_034079_2_0_9"/>
<dbReference type="OrthoDB" id="1654473at2"/>
<dbReference type="PhylomeDB" id="Q8Y6T8"/>
<dbReference type="BioCyc" id="LMON169963:LMO1594-MONOMER"/>
<dbReference type="Proteomes" id="UP000000817">
    <property type="component" value="Chromosome"/>
</dbReference>
<dbReference type="GO" id="GO:0005886">
    <property type="term" value="C:plasma membrane"/>
    <property type="evidence" value="ECO:0007669"/>
    <property type="project" value="UniProtKB-SubCell"/>
</dbReference>
<dbReference type="GO" id="GO:0005940">
    <property type="term" value="C:septin ring"/>
    <property type="evidence" value="ECO:0007669"/>
    <property type="project" value="InterPro"/>
</dbReference>
<dbReference type="GO" id="GO:0000917">
    <property type="term" value="P:division septum assembly"/>
    <property type="evidence" value="ECO:0007669"/>
    <property type="project" value="UniProtKB-KW"/>
</dbReference>
<dbReference type="GO" id="GO:0000921">
    <property type="term" value="P:septin ring assembly"/>
    <property type="evidence" value="ECO:0007669"/>
    <property type="project" value="InterPro"/>
</dbReference>
<dbReference type="HAMAP" id="MF_00728">
    <property type="entry name" value="EzrA"/>
    <property type="match status" value="1"/>
</dbReference>
<dbReference type="InterPro" id="IPR010379">
    <property type="entry name" value="EzrA"/>
</dbReference>
<dbReference type="NCBIfam" id="NF003408">
    <property type="entry name" value="PRK04778.1-2"/>
    <property type="match status" value="1"/>
</dbReference>
<dbReference type="Pfam" id="PF06160">
    <property type="entry name" value="EzrA"/>
    <property type="match status" value="1"/>
</dbReference>
<sequence length="571" mass="66520">MYYMLIGFIIVVIAVIGAGYILKRKHYQRINELEEKKIKLRERPVIDELSKVKKLKLTGQTEALFESWRSSWDEIETRLFPDLEEVLLEAEMNTDRYKFRSATHAENDIEQMLVVIEKQMDQILGGLKELLISEEKNAKESRATKEKFAELRREVLTRGFKLGETLPYIETKLSELSESLNSYDSLTDQGDHLEAREIVIVVQKEMQVIEAQMERIPSLLHETDTILPEEMTKLRAGYEEMVRKGYYLAQMELDKEISRMKNQIDKMKKNVINLDLDEAEQGVEELHNEIDLFYDTLEHEAEARHFVKENHSPTSDKLQRQNAVSDALAEQITEVKQTYHVAEDDLAVYLKTSAKLSEAKENFEQLTALIASGEIAYSAAQDTLKEIDAALITISTEQDKFAEELRSLRKDELEARDDAERMRRAIITLDRKMERERLPGLPEEYLSLREHMGESIDALEKRLEEKPLNMKAVSQDWRIAEEDLTHLTEKAEEMMENVRLVEHVIQYANRYRLRNKELADELVQAENHFYNDYQYKKALEIAVTALEKVETGAFKKVEKAYESKVSVDDIE</sequence>
<keyword id="KW-0131">Cell cycle</keyword>
<keyword id="KW-0132">Cell division</keyword>
<keyword id="KW-1003">Cell membrane</keyword>
<keyword id="KW-0175">Coiled coil</keyword>
<keyword id="KW-0472">Membrane</keyword>
<keyword id="KW-1185">Reference proteome</keyword>
<keyword id="KW-0717">Septation</keyword>
<keyword id="KW-0812">Transmembrane</keyword>
<keyword id="KW-1133">Transmembrane helix</keyword>
<gene>
    <name evidence="1" type="primary">ezrA</name>
    <name type="ordered locus">lmo1594</name>
</gene>
<name>EZRA_LISMO</name>
<reference key="1">
    <citation type="journal article" date="2001" name="Science">
        <title>Comparative genomics of Listeria species.</title>
        <authorList>
            <person name="Glaser P."/>
            <person name="Frangeul L."/>
            <person name="Buchrieser C."/>
            <person name="Rusniok C."/>
            <person name="Amend A."/>
            <person name="Baquero F."/>
            <person name="Berche P."/>
            <person name="Bloecker H."/>
            <person name="Brandt P."/>
            <person name="Chakraborty T."/>
            <person name="Charbit A."/>
            <person name="Chetouani F."/>
            <person name="Couve E."/>
            <person name="de Daruvar A."/>
            <person name="Dehoux P."/>
            <person name="Domann E."/>
            <person name="Dominguez-Bernal G."/>
            <person name="Duchaud E."/>
            <person name="Durant L."/>
            <person name="Dussurget O."/>
            <person name="Entian K.-D."/>
            <person name="Fsihi H."/>
            <person name="Garcia-del Portillo F."/>
            <person name="Garrido P."/>
            <person name="Gautier L."/>
            <person name="Goebel W."/>
            <person name="Gomez-Lopez N."/>
            <person name="Hain T."/>
            <person name="Hauf J."/>
            <person name="Jackson D."/>
            <person name="Jones L.-M."/>
            <person name="Kaerst U."/>
            <person name="Kreft J."/>
            <person name="Kuhn M."/>
            <person name="Kunst F."/>
            <person name="Kurapkat G."/>
            <person name="Madueno E."/>
            <person name="Maitournam A."/>
            <person name="Mata Vicente J."/>
            <person name="Ng E."/>
            <person name="Nedjari H."/>
            <person name="Nordsiek G."/>
            <person name="Novella S."/>
            <person name="de Pablos B."/>
            <person name="Perez-Diaz J.-C."/>
            <person name="Purcell R."/>
            <person name="Remmel B."/>
            <person name="Rose M."/>
            <person name="Schlueter T."/>
            <person name="Simoes N."/>
            <person name="Tierrez A."/>
            <person name="Vazquez-Boland J.-A."/>
            <person name="Voss H."/>
            <person name="Wehland J."/>
            <person name="Cossart P."/>
        </authorList>
    </citation>
    <scope>NUCLEOTIDE SEQUENCE [LARGE SCALE GENOMIC DNA]</scope>
    <source>
        <strain>ATCC BAA-679 / EGD-e</strain>
    </source>
</reference>
<accession>Q8Y6T8</accession>
<proteinExistence type="inferred from homology"/>
<protein>
    <recommendedName>
        <fullName evidence="1">Septation ring formation regulator EzrA</fullName>
    </recommendedName>
</protein>
<comment type="function">
    <text evidence="1">Negative regulator of FtsZ ring formation; modulates the frequency and position of FtsZ ring formation. Inhibits FtsZ ring formation at polar sites. Interacts either with FtsZ or with one of its binding partners to promote depolymerization.</text>
</comment>
<comment type="subcellular location">
    <subcellularLocation>
        <location>Cell membrane</location>
        <topology>Single-pass membrane protein</topology>
    </subcellularLocation>
    <text evidence="1">Colocalized with FtsZ to the nascent septal site.</text>
</comment>
<comment type="similarity">
    <text evidence="1">Belongs to the EzrA family.</text>
</comment>